<accession>B1MMY4</accession>
<keyword id="KW-1185">Reference proteome</keyword>
<keyword id="KW-0687">Ribonucleoprotein</keyword>
<keyword id="KW-0689">Ribosomal protein</keyword>
<evidence type="ECO:0000255" key="1">
    <source>
        <dbReference type="HAMAP-Rule" id="MF_00539"/>
    </source>
</evidence>
<evidence type="ECO:0000305" key="2"/>
<sequence>MAHKKGASSSRNGRDSAAQRLGVKRFGGQVVKAGEILVRQRGTHFHPGVNVGRGGDDTLFATSAGTVEFGARRGRRVVNILPVDA</sequence>
<name>RL27_MYCA9</name>
<protein>
    <recommendedName>
        <fullName evidence="1">Large ribosomal subunit protein bL27</fullName>
    </recommendedName>
    <alternativeName>
        <fullName evidence="2">50S ribosomal protein L27</fullName>
    </alternativeName>
</protein>
<dbReference type="EMBL" id="CU458896">
    <property type="protein sequence ID" value="CAM61696.1"/>
    <property type="molecule type" value="Genomic_DNA"/>
</dbReference>
<dbReference type="RefSeq" id="WP_005060213.1">
    <property type="nucleotide sequence ID" value="NZ_MLCG01000002.1"/>
</dbReference>
<dbReference type="SMR" id="B1MMY4"/>
<dbReference type="GeneID" id="93378563"/>
<dbReference type="KEGG" id="mab:MAB_1611"/>
<dbReference type="Proteomes" id="UP000007137">
    <property type="component" value="Chromosome"/>
</dbReference>
<dbReference type="GO" id="GO:0022625">
    <property type="term" value="C:cytosolic large ribosomal subunit"/>
    <property type="evidence" value="ECO:0007669"/>
    <property type="project" value="TreeGrafter"/>
</dbReference>
<dbReference type="GO" id="GO:0003735">
    <property type="term" value="F:structural constituent of ribosome"/>
    <property type="evidence" value="ECO:0007669"/>
    <property type="project" value="InterPro"/>
</dbReference>
<dbReference type="GO" id="GO:0006412">
    <property type="term" value="P:translation"/>
    <property type="evidence" value="ECO:0007669"/>
    <property type="project" value="UniProtKB-UniRule"/>
</dbReference>
<dbReference type="FunFam" id="2.40.50.100:FF:000020">
    <property type="entry name" value="50S ribosomal protein L27"/>
    <property type="match status" value="1"/>
</dbReference>
<dbReference type="Gene3D" id="2.40.50.100">
    <property type="match status" value="1"/>
</dbReference>
<dbReference type="HAMAP" id="MF_00539">
    <property type="entry name" value="Ribosomal_bL27"/>
    <property type="match status" value="1"/>
</dbReference>
<dbReference type="InterPro" id="IPR001684">
    <property type="entry name" value="Ribosomal_bL27"/>
</dbReference>
<dbReference type="InterPro" id="IPR018261">
    <property type="entry name" value="Ribosomal_bL27_CS"/>
</dbReference>
<dbReference type="NCBIfam" id="TIGR00062">
    <property type="entry name" value="L27"/>
    <property type="match status" value="1"/>
</dbReference>
<dbReference type="PANTHER" id="PTHR15893:SF0">
    <property type="entry name" value="LARGE RIBOSOMAL SUBUNIT PROTEIN BL27M"/>
    <property type="match status" value="1"/>
</dbReference>
<dbReference type="PANTHER" id="PTHR15893">
    <property type="entry name" value="RIBOSOMAL PROTEIN L27"/>
    <property type="match status" value="1"/>
</dbReference>
<dbReference type="Pfam" id="PF01016">
    <property type="entry name" value="Ribosomal_L27"/>
    <property type="match status" value="1"/>
</dbReference>
<dbReference type="PRINTS" id="PR00063">
    <property type="entry name" value="RIBOSOMALL27"/>
</dbReference>
<dbReference type="SUPFAM" id="SSF110324">
    <property type="entry name" value="Ribosomal L27 protein-like"/>
    <property type="match status" value="1"/>
</dbReference>
<dbReference type="PROSITE" id="PS00831">
    <property type="entry name" value="RIBOSOMAL_L27"/>
    <property type="match status" value="1"/>
</dbReference>
<reference key="1">
    <citation type="journal article" date="2009" name="PLoS ONE">
        <title>Non mycobacterial virulence genes in the genome of the emerging pathogen Mycobacterium abscessus.</title>
        <authorList>
            <person name="Ripoll F."/>
            <person name="Pasek S."/>
            <person name="Schenowitz C."/>
            <person name="Dossat C."/>
            <person name="Barbe V."/>
            <person name="Rottman M."/>
            <person name="Macheras E."/>
            <person name="Heym B."/>
            <person name="Herrmann J.L."/>
            <person name="Daffe M."/>
            <person name="Brosch R."/>
            <person name="Risler J.L."/>
            <person name="Gaillard J.L."/>
        </authorList>
    </citation>
    <scope>NUCLEOTIDE SEQUENCE [LARGE SCALE GENOMIC DNA]</scope>
    <source>
        <strain>ATCC 19977 / DSM 44196 / CCUG 20993 / CIP 104536 / JCM 13569 / NCTC 13031 / TMC 1543 / L948</strain>
    </source>
</reference>
<organism>
    <name type="scientific">Mycobacteroides abscessus (strain ATCC 19977 / DSM 44196 / CCUG 20993 / CIP 104536 / JCM 13569 / NCTC 13031 / TMC 1543 / L948)</name>
    <name type="common">Mycobacterium abscessus</name>
    <dbReference type="NCBI Taxonomy" id="561007"/>
    <lineage>
        <taxon>Bacteria</taxon>
        <taxon>Bacillati</taxon>
        <taxon>Actinomycetota</taxon>
        <taxon>Actinomycetes</taxon>
        <taxon>Mycobacteriales</taxon>
        <taxon>Mycobacteriaceae</taxon>
        <taxon>Mycobacteroides</taxon>
        <taxon>Mycobacteroides abscessus</taxon>
    </lineage>
</organism>
<proteinExistence type="inferred from homology"/>
<gene>
    <name evidence="1" type="primary">rpmA</name>
    <name type="ordered locus">MAB_1611</name>
</gene>
<feature type="chain" id="PRO_1000128775" description="Large ribosomal subunit protein bL27">
    <location>
        <begin position="1"/>
        <end position="85"/>
    </location>
</feature>
<comment type="similarity">
    <text evidence="1">Belongs to the bacterial ribosomal protein bL27 family.</text>
</comment>